<protein>
    <recommendedName>
        <fullName>Complex III assembly factor LYRM7</fullName>
    </recommendedName>
    <alternativeName>
        <fullName>LYR motif-containing protein 7</fullName>
    </alternativeName>
</protein>
<reference key="1">
    <citation type="submission" date="2007-06" db="EMBL/GenBank/DDBJ databases">
        <authorList>
            <consortium name="NIH - Zebrafish Gene Collection (ZGC) project"/>
        </authorList>
    </citation>
    <scope>NUCLEOTIDE SEQUENCE [LARGE SCALE MRNA]</scope>
    <source>
        <tissue>Eye</tissue>
    </source>
</reference>
<comment type="function">
    <text evidence="1">Assembly factor required for Rieske Fe-S protein UQCRFS1 incorporation into the cytochrome b-c1 (CIII) complex. Functions as a chaperone, binding to this subunit within the mitochondrial matrix and stabilizing it prior to its translocation and insertion into the late CIII dimeric intermediate within the mitochondrial inner membrane (By similarity).</text>
</comment>
<comment type="subunit">
    <text evidence="1">Interacts with UQCRFS1.</text>
</comment>
<comment type="subcellular location">
    <subcellularLocation>
        <location evidence="1">Mitochondrion matrix</location>
    </subcellularLocation>
</comment>
<comment type="similarity">
    <text evidence="2">Belongs to the complex I LYR family.</text>
</comment>
<accession>A5PLG0</accession>
<gene>
    <name type="primary">LYRM7</name>
    <name type="synonym">MZM1L</name>
    <name type="ORF">zgc:165597</name>
</gene>
<organism>
    <name type="scientific">Danio rerio</name>
    <name type="common">Zebrafish</name>
    <name type="synonym">Brachydanio rerio</name>
    <dbReference type="NCBI Taxonomy" id="7955"/>
    <lineage>
        <taxon>Eukaryota</taxon>
        <taxon>Metazoa</taxon>
        <taxon>Chordata</taxon>
        <taxon>Craniata</taxon>
        <taxon>Vertebrata</taxon>
        <taxon>Euteleostomi</taxon>
        <taxon>Actinopterygii</taxon>
        <taxon>Neopterygii</taxon>
        <taxon>Teleostei</taxon>
        <taxon>Ostariophysi</taxon>
        <taxon>Cypriniformes</taxon>
        <taxon>Danionidae</taxon>
        <taxon>Danioninae</taxon>
        <taxon>Danio</taxon>
    </lineage>
</organism>
<feature type="chain" id="PRO_0000370341" description="Complex III assembly factor LYRM7">
    <location>
        <begin position="1"/>
        <end position="104"/>
    </location>
</feature>
<sequence length="104" mass="12206">MGTRLKVLRVFKDLHRTRRDVFRDDNRALTAARVKINEEFKKNKNETSDDNIKEMLKMARAVETILRESVIQAEHVDENKIVLRPRKSLLLENVPYCDAPSKKT</sequence>
<dbReference type="EMBL" id="BC142889">
    <property type="protein sequence ID" value="AAI42890.1"/>
    <property type="molecule type" value="mRNA"/>
</dbReference>
<dbReference type="RefSeq" id="NP_001092229.1">
    <property type="nucleotide sequence ID" value="NM_001098759.1"/>
</dbReference>
<dbReference type="SMR" id="A5PLG0"/>
<dbReference type="FunCoup" id="A5PLG0">
    <property type="interactions" value="238"/>
</dbReference>
<dbReference type="STRING" id="7955.ENSDARP00000099103"/>
<dbReference type="PaxDb" id="7955-ENSDARP00000099103"/>
<dbReference type="PeptideAtlas" id="A5PLG0"/>
<dbReference type="GeneID" id="100002948"/>
<dbReference type="KEGG" id="dre:100002948"/>
<dbReference type="AGR" id="ZFIN:ZDB-GENE-070615-32"/>
<dbReference type="CTD" id="90624"/>
<dbReference type="ZFIN" id="ZDB-GENE-070615-32">
    <property type="gene designation" value="lyrm7"/>
</dbReference>
<dbReference type="eggNOG" id="ENOG502S5FU">
    <property type="taxonomic scope" value="Eukaryota"/>
</dbReference>
<dbReference type="InParanoid" id="A5PLG0"/>
<dbReference type="OrthoDB" id="529194at2759"/>
<dbReference type="PhylomeDB" id="A5PLG0"/>
<dbReference type="Reactome" id="R-DRE-9865881">
    <property type="pathway name" value="Complex III assembly"/>
</dbReference>
<dbReference type="PRO" id="PR:A5PLG0"/>
<dbReference type="Proteomes" id="UP000000437">
    <property type="component" value="Alternate scaffold 10"/>
</dbReference>
<dbReference type="Proteomes" id="UP000000437">
    <property type="component" value="Chromosome 10"/>
</dbReference>
<dbReference type="GO" id="GO:0005759">
    <property type="term" value="C:mitochondrial matrix"/>
    <property type="evidence" value="ECO:0000318"/>
    <property type="project" value="GO_Central"/>
</dbReference>
<dbReference type="GO" id="GO:0044183">
    <property type="term" value="F:protein folding chaperone"/>
    <property type="evidence" value="ECO:0000318"/>
    <property type="project" value="GO_Central"/>
</dbReference>
<dbReference type="GO" id="GO:0034551">
    <property type="term" value="P:mitochondrial respiratory chain complex III assembly"/>
    <property type="evidence" value="ECO:0000318"/>
    <property type="project" value="GO_Central"/>
</dbReference>
<dbReference type="CDD" id="cd20267">
    <property type="entry name" value="Complex1_LYR_LYRM7"/>
    <property type="match status" value="1"/>
</dbReference>
<dbReference type="InterPro" id="IPR008011">
    <property type="entry name" value="Complex1_LYR_dom"/>
</dbReference>
<dbReference type="InterPro" id="IPR045298">
    <property type="entry name" value="Complex1_LYR_LYRM7"/>
</dbReference>
<dbReference type="InterPro" id="IPR050435">
    <property type="entry name" value="MZM1/LYRM7"/>
</dbReference>
<dbReference type="PANTHER" id="PTHR46749">
    <property type="entry name" value="COMPLEX III ASSEMBLY FACTOR LYRM7"/>
    <property type="match status" value="1"/>
</dbReference>
<dbReference type="PANTHER" id="PTHR46749:SF1">
    <property type="entry name" value="COMPLEX III ASSEMBLY FACTOR LYRM7"/>
    <property type="match status" value="1"/>
</dbReference>
<dbReference type="Pfam" id="PF05347">
    <property type="entry name" value="Complex1_LYR"/>
    <property type="match status" value="1"/>
</dbReference>
<name>LYRM7_DANRE</name>
<evidence type="ECO:0000250" key="1"/>
<evidence type="ECO:0000305" key="2"/>
<keyword id="KW-0143">Chaperone</keyword>
<keyword id="KW-0496">Mitochondrion</keyword>
<keyword id="KW-1185">Reference proteome</keyword>
<proteinExistence type="inferred from homology"/>